<evidence type="ECO:0000255" key="1">
    <source>
        <dbReference type="HAMAP-Rule" id="MF_00382"/>
    </source>
</evidence>
<evidence type="ECO:0000305" key="2"/>
<dbReference type="EMBL" id="CP000057">
    <property type="protein sequence ID" value="AAX88441.1"/>
    <property type="molecule type" value="Genomic_DNA"/>
</dbReference>
<dbReference type="RefSeq" id="WP_005596075.1">
    <property type="nucleotide sequence ID" value="NC_007146.2"/>
</dbReference>
<dbReference type="SMR" id="Q4QKK6"/>
<dbReference type="GeneID" id="93297698"/>
<dbReference type="KEGG" id="hit:NTHI1643"/>
<dbReference type="HOGENOM" id="CLU_123265_0_1_6"/>
<dbReference type="Proteomes" id="UP000002525">
    <property type="component" value="Chromosome"/>
</dbReference>
<dbReference type="GO" id="GO:1990904">
    <property type="term" value="C:ribonucleoprotein complex"/>
    <property type="evidence" value="ECO:0007669"/>
    <property type="project" value="UniProtKB-KW"/>
</dbReference>
<dbReference type="GO" id="GO:0005840">
    <property type="term" value="C:ribosome"/>
    <property type="evidence" value="ECO:0007669"/>
    <property type="project" value="UniProtKB-KW"/>
</dbReference>
<dbReference type="GO" id="GO:0019843">
    <property type="term" value="F:rRNA binding"/>
    <property type="evidence" value="ECO:0007669"/>
    <property type="project" value="UniProtKB-UniRule"/>
</dbReference>
<dbReference type="GO" id="GO:0003735">
    <property type="term" value="F:structural constituent of ribosome"/>
    <property type="evidence" value="ECO:0007669"/>
    <property type="project" value="InterPro"/>
</dbReference>
<dbReference type="GO" id="GO:0000027">
    <property type="term" value="P:ribosomal large subunit assembly"/>
    <property type="evidence" value="ECO:0007669"/>
    <property type="project" value="UniProtKB-UniRule"/>
</dbReference>
<dbReference type="GO" id="GO:0006412">
    <property type="term" value="P:translation"/>
    <property type="evidence" value="ECO:0007669"/>
    <property type="project" value="InterPro"/>
</dbReference>
<dbReference type="CDD" id="cd07026">
    <property type="entry name" value="Ribosomal_L20"/>
    <property type="match status" value="1"/>
</dbReference>
<dbReference type="FunFam" id="1.10.1900.20:FF:000001">
    <property type="entry name" value="50S ribosomal protein L20"/>
    <property type="match status" value="1"/>
</dbReference>
<dbReference type="Gene3D" id="6.10.160.10">
    <property type="match status" value="1"/>
</dbReference>
<dbReference type="Gene3D" id="1.10.1900.20">
    <property type="entry name" value="Ribosomal protein L20"/>
    <property type="match status" value="1"/>
</dbReference>
<dbReference type="HAMAP" id="MF_00382">
    <property type="entry name" value="Ribosomal_bL20"/>
    <property type="match status" value="1"/>
</dbReference>
<dbReference type="InterPro" id="IPR005813">
    <property type="entry name" value="Ribosomal_bL20"/>
</dbReference>
<dbReference type="InterPro" id="IPR049946">
    <property type="entry name" value="RIBOSOMAL_L20_CS"/>
</dbReference>
<dbReference type="InterPro" id="IPR035566">
    <property type="entry name" value="Ribosomal_protein_bL20_C"/>
</dbReference>
<dbReference type="NCBIfam" id="TIGR01032">
    <property type="entry name" value="rplT_bact"/>
    <property type="match status" value="1"/>
</dbReference>
<dbReference type="PANTHER" id="PTHR10986">
    <property type="entry name" value="39S RIBOSOMAL PROTEIN L20"/>
    <property type="match status" value="1"/>
</dbReference>
<dbReference type="Pfam" id="PF00453">
    <property type="entry name" value="Ribosomal_L20"/>
    <property type="match status" value="1"/>
</dbReference>
<dbReference type="PRINTS" id="PR00062">
    <property type="entry name" value="RIBOSOMALL20"/>
</dbReference>
<dbReference type="SUPFAM" id="SSF74731">
    <property type="entry name" value="Ribosomal protein L20"/>
    <property type="match status" value="1"/>
</dbReference>
<dbReference type="PROSITE" id="PS00937">
    <property type="entry name" value="RIBOSOMAL_L20"/>
    <property type="match status" value="1"/>
</dbReference>
<name>RL20_HAEI8</name>
<sequence>MARVKRGVIARARHKKVLKAAKGYYGARSRVYRVAFQAVIKAGQYAYRDRRQRKRQFRQLWIARINAAARQNGLSYSKFINGLKKASVEIDRKILADIAVFDKVAFAALVEKAKSAL</sequence>
<protein>
    <recommendedName>
        <fullName evidence="1">Large ribosomal subunit protein bL20</fullName>
    </recommendedName>
    <alternativeName>
        <fullName evidence="2">50S ribosomal protein L20</fullName>
    </alternativeName>
</protein>
<reference key="1">
    <citation type="journal article" date="2005" name="J. Bacteriol.">
        <title>Genomic sequence of an otitis media isolate of nontypeable Haemophilus influenzae: comparative study with H. influenzae serotype d, strain KW20.</title>
        <authorList>
            <person name="Harrison A."/>
            <person name="Dyer D.W."/>
            <person name="Gillaspy A."/>
            <person name="Ray W.C."/>
            <person name="Mungur R."/>
            <person name="Carson M.B."/>
            <person name="Zhong H."/>
            <person name="Gipson J."/>
            <person name="Gipson M."/>
            <person name="Johnson L.S."/>
            <person name="Lewis L."/>
            <person name="Bakaletz L.O."/>
            <person name="Munson R.S. Jr."/>
        </authorList>
    </citation>
    <scope>NUCLEOTIDE SEQUENCE [LARGE SCALE GENOMIC DNA]</scope>
    <source>
        <strain>86-028NP</strain>
    </source>
</reference>
<feature type="chain" id="PRO_0000243687" description="Large ribosomal subunit protein bL20">
    <location>
        <begin position="1"/>
        <end position="117"/>
    </location>
</feature>
<gene>
    <name evidence="1" type="primary">rplT</name>
    <name type="ordered locus">NTHI1643</name>
</gene>
<comment type="function">
    <text evidence="1">Binds directly to 23S ribosomal RNA and is necessary for the in vitro assembly process of the 50S ribosomal subunit. It is not involved in the protein synthesizing functions of that subunit.</text>
</comment>
<comment type="similarity">
    <text evidence="1">Belongs to the bacterial ribosomal protein bL20 family.</text>
</comment>
<organism>
    <name type="scientific">Haemophilus influenzae (strain 86-028NP)</name>
    <dbReference type="NCBI Taxonomy" id="281310"/>
    <lineage>
        <taxon>Bacteria</taxon>
        <taxon>Pseudomonadati</taxon>
        <taxon>Pseudomonadota</taxon>
        <taxon>Gammaproteobacteria</taxon>
        <taxon>Pasteurellales</taxon>
        <taxon>Pasteurellaceae</taxon>
        <taxon>Haemophilus</taxon>
    </lineage>
</organism>
<keyword id="KW-0687">Ribonucleoprotein</keyword>
<keyword id="KW-0689">Ribosomal protein</keyword>
<keyword id="KW-0694">RNA-binding</keyword>
<keyword id="KW-0699">rRNA-binding</keyword>
<proteinExistence type="inferred from homology"/>
<accession>Q4QKK6</accession>